<evidence type="ECO:0000255" key="1">
    <source>
        <dbReference type="HAMAP-Rule" id="MF_00375"/>
    </source>
</evidence>
<keyword id="KW-0963">Cytoplasm</keyword>
<keyword id="KW-0413">Isomerase</keyword>
<keyword id="KW-0627">Porphyrin biosynthesis</keyword>
<keyword id="KW-0663">Pyridoxal phosphate</keyword>
<gene>
    <name evidence="1" type="primary">hemL</name>
    <name type="ordered locus">Pmen_3774</name>
</gene>
<feature type="chain" id="PRO_1000059997" description="Glutamate-1-semialdehyde 2,1-aminomutase">
    <location>
        <begin position="1"/>
        <end position="429"/>
    </location>
</feature>
<feature type="modified residue" description="N6-(pyridoxal phosphate)lysine" evidence="1">
    <location>
        <position position="265"/>
    </location>
</feature>
<organism>
    <name type="scientific">Ectopseudomonas mendocina (strain ymp)</name>
    <name type="common">Pseudomonas mendocina</name>
    <dbReference type="NCBI Taxonomy" id="399739"/>
    <lineage>
        <taxon>Bacteria</taxon>
        <taxon>Pseudomonadati</taxon>
        <taxon>Pseudomonadota</taxon>
        <taxon>Gammaproteobacteria</taxon>
        <taxon>Pseudomonadales</taxon>
        <taxon>Pseudomonadaceae</taxon>
        <taxon>Ectopseudomonas</taxon>
    </lineage>
</organism>
<name>GSA_ECTM1</name>
<accession>A4XYV6</accession>
<reference key="1">
    <citation type="submission" date="2007-04" db="EMBL/GenBank/DDBJ databases">
        <title>Complete sequence of Pseudomonas mendocina ymp.</title>
        <authorList>
            <consortium name="US DOE Joint Genome Institute"/>
            <person name="Copeland A."/>
            <person name="Lucas S."/>
            <person name="Lapidus A."/>
            <person name="Barry K."/>
            <person name="Glavina del Rio T."/>
            <person name="Dalin E."/>
            <person name="Tice H."/>
            <person name="Pitluck S."/>
            <person name="Kiss H."/>
            <person name="Brettin T."/>
            <person name="Detter J.C."/>
            <person name="Bruce D."/>
            <person name="Han C."/>
            <person name="Schmutz J."/>
            <person name="Larimer F."/>
            <person name="Land M."/>
            <person name="Hauser L."/>
            <person name="Kyrpides N."/>
            <person name="Mikhailova N."/>
            <person name="Hersman L."/>
            <person name="Dubois J."/>
            <person name="Maurice P."/>
            <person name="Richardson P."/>
        </authorList>
    </citation>
    <scope>NUCLEOTIDE SEQUENCE [LARGE SCALE GENOMIC DNA]</scope>
    <source>
        <strain>ymp</strain>
    </source>
</reference>
<dbReference type="EC" id="5.4.3.8" evidence="1"/>
<dbReference type="EMBL" id="CP000680">
    <property type="protein sequence ID" value="ABP86522.1"/>
    <property type="molecule type" value="Genomic_DNA"/>
</dbReference>
<dbReference type="SMR" id="A4XYV6"/>
<dbReference type="STRING" id="399739.Pmen_3774"/>
<dbReference type="KEGG" id="pmy:Pmen_3774"/>
<dbReference type="PATRIC" id="fig|399739.8.peg.3827"/>
<dbReference type="eggNOG" id="COG0001">
    <property type="taxonomic scope" value="Bacteria"/>
</dbReference>
<dbReference type="HOGENOM" id="CLU_016922_1_5_6"/>
<dbReference type="OrthoDB" id="9801052at2"/>
<dbReference type="UniPathway" id="UPA00251">
    <property type="reaction ID" value="UER00317"/>
</dbReference>
<dbReference type="GO" id="GO:0005737">
    <property type="term" value="C:cytoplasm"/>
    <property type="evidence" value="ECO:0007669"/>
    <property type="project" value="UniProtKB-SubCell"/>
</dbReference>
<dbReference type="GO" id="GO:0042286">
    <property type="term" value="F:glutamate-1-semialdehyde 2,1-aminomutase activity"/>
    <property type="evidence" value="ECO:0007669"/>
    <property type="project" value="UniProtKB-UniRule"/>
</dbReference>
<dbReference type="GO" id="GO:0030170">
    <property type="term" value="F:pyridoxal phosphate binding"/>
    <property type="evidence" value="ECO:0007669"/>
    <property type="project" value="InterPro"/>
</dbReference>
<dbReference type="GO" id="GO:0008483">
    <property type="term" value="F:transaminase activity"/>
    <property type="evidence" value="ECO:0007669"/>
    <property type="project" value="InterPro"/>
</dbReference>
<dbReference type="GO" id="GO:0006782">
    <property type="term" value="P:protoporphyrinogen IX biosynthetic process"/>
    <property type="evidence" value="ECO:0007669"/>
    <property type="project" value="UniProtKB-UniRule"/>
</dbReference>
<dbReference type="CDD" id="cd00610">
    <property type="entry name" value="OAT_like"/>
    <property type="match status" value="1"/>
</dbReference>
<dbReference type="FunFam" id="3.40.640.10:FF:000021">
    <property type="entry name" value="Glutamate-1-semialdehyde 2,1-aminomutase"/>
    <property type="match status" value="1"/>
</dbReference>
<dbReference type="Gene3D" id="3.90.1150.10">
    <property type="entry name" value="Aspartate Aminotransferase, domain 1"/>
    <property type="match status" value="1"/>
</dbReference>
<dbReference type="Gene3D" id="3.40.640.10">
    <property type="entry name" value="Type I PLP-dependent aspartate aminotransferase-like (Major domain)"/>
    <property type="match status" value="1"/>
</dbReference>
<dbReference type="HAMAP" id="MF_00375">
    <property type="entry name" value="HemL_aminotrans_3"/>
    <property type="match status" value="1"/>
</dbReference>
<dbReference type="InterPro" id="IPR004639">
    <property type="entry name" value="4pyrrol_synth_GluAld_NH2Trfase"/>
</dbReference>
<dbReference type="InterPro" id="IPR005814">
    <property type="entry name" value="Aminotrans_3"/>
</dbReference>
<dbReference type="InterPro" id="IPR049704">
    <property type="entry name" value="Aminotrans_3_PPA_site"/>
</dbReference>
<dbReference type="InterPro" id="IPR015424">
    <property type="entry name" value="PyrdxlP-dep_Trfase"/>
</dbReference>
<dbReference type="InterPro" id="IPR015421">
    <property type="entry name" value="PyrdxlP-dep_Trfase_major"/>
</dbReference>
<dbReference type="InterPro" id="IPR015422">
    <property type="entry name" value="PyrdxlP-dep_Trfase_small"/>
</dbReference>
<dbReference type="NCBIfam" id="TIGR00713">
    <property type="entry name" value="hemL"/>
    <property type="match status" value="1"/>
</dbReference>
<dbReference type="NCBIfam" id="NF000818">
    <property type="entry name" value="PRK00062.1"/>
    <property type="match status" value="1"/>
</dbReference>
<dbReference type="PANTHER" id="PTHR43713">
    <property type="entry name" value="GLUTAMATE-1-SEMIALDEHYDE 2,1-AMINOMUTASE"/>
    <property type="match status" value="1"/>
</dbReference>
<dbReference type="PANTHER" id="PTHR43713:SF3">
    <property type="entry name" value="GLUTAMATE-1-SEMIALDEHYDE 2,1-AMINOMUTASE 1, CHLOROPLASTIC-RELATED"/>
    <property type="match status" value="1"/>
</dbReference>
<dbReference type="Pfam" id="PF00202">
    <property type="entry name" value="Aminotran_3"/>
    <property type="match status" value="1"/>
</dbReference>
<dbReference type="SUPFAM" id="SSF53383">
    <property type="entry name" value="PLP-dependent transferases"/>
    <property type="match status" value="1"/>
</dbReference>
<dbReference type="PROSITE" id="PS00600">
    <property type="entry name" value="AA_TRANSFER_CLASS_3"/>
    <property type="match status" value="1"/>
</dbReference>
<sequence>MSRSEILFANAQKHIPGGVNSPVRAFRSVGGTPLFFKHAEGAYVVDEDDKRYVDYVGSWGPMILGHSHPDVLDSVRRQLQHGLSYGAPTALETEMAELVCSLVPSMEMVRMVSSGTEATMSAIRLARGYTGRDSIIKFEGCYHGHSDSLLVKAGSGALTQGVPNSAGVPAAFAKHTLTLPFNDIDAVAECLAQVGKEVACIIVEPVAGNMNCVPPAPGFLEGLREQCDKHGVVLIFDEVMTGFRVALGGAQAHYGVTPDLTTFGKIIGGGMPVGCFGGKRAIMECIAPLGPVYQAGTLSGNPLAMAAGLTTLKLISRPGFHTELSDYTTRMLDGLQQRADAAGIPFVTTQAGAMFGLYFSGADDIVTFADVMASDSARFNRFFHLMLEGGVYLAPSAFEAGFTSIAHGDKELEITFAAAERAFAELKKA</sequence>
<protein>
    <recommendedName>
        <fullName evidence="1">Glutamate-1-semialdehyde 2,1-aminomutase</fullName>
        <shortName evidence="1">GSA</shortName>
        <ecNumber evidence="1">5.4.3.8</ecNumber>
    </recommendedName>
    <alternativeName>
        <fullName evidence="1">Glutamate-1-semialdehyde aminotransferase</fullName>
        <shortName evidence="1">GSA-AT</shortName>
    </alternativeName>
</protein>
<comment type="catalytic activity">
    <reaction evidence="1">
        <text>(S)-4-amino-5-oxopentanoate = 5-aminolevulinate</text>
        <dbReference type="Rhea" id="RHEA:14265"/>
        <dbReference type="ChEBI" id="CHEBI:57501"/>
        <dbReference type="ChEBI" id="CHEBI:356416"/>
        <dbReference type="EC" id="5.4.3.8"/>
    </reaction>
</comment>
<comment type="cofactor">
    <cofactor evidence="1">
        <name>pyridoxal 5'-phosphate</name>
        <dbReference type="ChEBI" id="CHEBI:597326"/>
    </cofactor>
</comment>
<comment type="pathway">
    <text evidence="1">Porphyrin-containing compound metabolism; protoporphyrin-IX biosynthesis; 5-aminolevulinate from L-glutamyl-tRNA(Glu): step 2/2.</text>
</comment>
<comment type="subunit">
    <text evidence="1">Homodimer.</text>
</comment>
<comment type="subcellular location">
    <subcellularLocation>
        <location evidence="1">Cytoplasm</location>
    </subcellularLocation>
</comment>
<comment type="similarity">
    <text evidence="1">Belongs to the class-III pyridoxal-phosphate-dependent aminotransferase family. HemL subfamily.</text>
</comment>
<proteinExistence type="inferred from homology"/>